<accession>Q81ZC2</accession>
<accession>Q6I468</accession>
<accession>Q6KXX4</accession>
<keyword id="KW-0119">Carbohydrate metabolism</keyword>
<keyword id="KW-0413">Isomerase</keyword>
<keyword id="KW-1185">Reference proteome</keyword>
<name>DRDI_BACAN</name>
<gene>
    <name evidence="1" type="primary">drdI</name>
    <name type="ordered locus">BA_0347</name>
    <name type="ordered locus">GBAA_0347</name>
    <name type="ordered locus">BAS0332</name>
</gene>
<proteinExistence type="inferred from homology"/>
<organism>
    <name type="scientific">Bacillus anthracis</name>
    <dbReference type="NCBI Taxonomy" id="1392"/>
    <lineage>
        <taxon>Bacteria</taxon>
        <taxon>Bacillati</taxon>
        <taxon>Bacillota</taxon>
        <taxon>Bacilli</taxon>
        <taxon>Bacillales</taxon>
        <taxon>Bacillaceae</taxon>
        <taxon>Bacillus</taxon>
        <taxon>Bacillus cereus group</taxon>
    </lineage>
</organism>
<feature type="chain" id="PRO_0000357141" description="5-deoxyribose 1-phosphate isomerase">
    <location>
        <begin position="1"/>
        <end position="347"/>
    </location>
</feature>
<feature type="active site" description="Proton donor" evidence="1">
    <location>
        <position position="239"/>
    </location>
</feature>
<feature type="binding site" evidence="1">
    <location>
        <begin position="48"/>
        <end position="50"/>
    </location>
    <ligand>
        <name>substrate</name>
    </ligand>
</feature>
<feature type="binding site" evidence="1">
    <location>
        <position position="91"/>
    </location>
    <ligand>
        <name>substrate</name>
    </ligand>
</feature>
<feature type="binding site" evidence="1">
    <location>
        <position position="198"/>
    </location>
    <ligand>
        <name>substrate</name>
    </ligand>
</feature>
<feature type="binding site" evidence="1">
    <location>
        <begin position="249"/>
        <end position="250"/>
    </location>
    <ligand>
        <name>substrate</name>
    </ligand>
</feature>
<feature type="site" description="Transition state stabilizer" evidence="1">
    <location>
        <position position="159"/>
    </location>
</feature>
<dbReference type="EC" id="5.3.1.-" evidence="1"/>
<dbReference type="EMBL" id="AE016879">
    <property type="protein sequence ID" value="AAP24380.1"/>
    <property type="molecule type" value="Genomic_DNA"/>
</dbReference>
<dbReference type="EMBL" id="AE017334">
    <property type="protein sequence ID" value="AAT29438.1"/>
    <property type="molecule type" value="Genomic_DNA"/>
</dbReference>
<dbReference type="EMBL" id="AE017225">
    <property type="protein sequence ID" value="AAT52663.1"/>
    <property type="status" value="ALT_INIT"/>
    <property type="molecule type" value="Genomic_DNA"/>
</dbReference>
<dbReference type="RefSeq" id="NP_842894.1">
    <property type="nucleotide sequence ID" value="NC_003997.3"/>
</dbReference>
<dbReference type="RefSeq" id="YP_026612.1">
    <property type="nucleotide sequence ID" value="NC_005945.1"/>
</dbReference>
<dbReference type="SMR" id="Q81ZC2"/>
<dbReference type="STRING" id="261594.GBAA_0347"/>
<dbReference type="DNASU" id="1087308"/>
<dbReference type="GeneID" id="45020403"/>
<dbReference type="KEGG" id="ban:BA_0347"/>
<dbReference type="KEGG" id="bar:GBAA_0347"/>
<dbReference type="KEGG" id="bat:BAS0332"/>
<dbReference type="PATRIC" id="fig|198094.11.peg.338"/>
<dbReference type="eggNOG" id="COG0182">
    <property type="taxonomic scope" value="Bacteria"/>
</dbReference>
<dbReference type="HOGENOM" id="CLU_016218_1_2_9"/>
<dbReference type="OMA" id="RLWVDET"/>
<dbReference type="OrthoDB" id="9803436at2"/>
<dbReference type="Proteomes" id="UP000000427">
    <property type="component" value="Chromosome"/>
</dbReference>
<dbReference type="Proteomes" id="UP000000594">
    <property type="component" value="Chromosome"/>
</dbReference>
<dbReference type="GO" id="GO:0046523">
    <property type="term" value="F:S-methyl-5-thioribose-1-phosphate isomerase activity"/>
    <property type="evidence" value="ECO:0007669"/>
    <property type="project" value="InterPro"/>
</dbReference>
<dbReference type="GO" id="GO:0019509">
    <property type="term" value="P:L-methionine salvage from methylthioadenosine"/>
    <property type="evidence" value="ECO:0007669"/>
    <property type="project" value="TreeGrafter"/>
</dbReference>
<dbReference type="GO" id="GO:0019323">
    <property type="term" value="P:pentose catabolic process"/>
    <property type="evidence" value="ECO:0007669"/>
    <property type="project" value="UniProtKB-UniRule"/>
</dbReference>
<dbReference type="FunFam" id="1.20.120.420:FF:000001">
    <property type="entry name" value="Methylthioribose-1-phosphate isomerase"/>
    <property type="match status" value="1"/>
</dbReference>
<dbReference type="FunFam" id="3.40.50.10470:FF:000006">
    <property type="entry name" value="Methylthioribose-1-phosphate isomerase"/>
    <property type="match status" value="1"/>
</dbReference>
<dbReference type="Gene3D" id="1.20.120.420">
    <property type="entry name" value="translation initiation factor eif-2b, domain 1"/>
    <property type="match status" value="1"/>
</dbReference>
<dbReference type="Gene3D" id="3.40.50.10470">
    <property type="entry name" value="Translation initiation factor eif-2b, domain 2"/>
    <property type="match status" value="1"/>
</dbReference>
<dbReference type="HAMAP" id="MF_02229">
    <property type="entry name" value="Deoxyribose1P_isomerase"/>
    <property type="match status" value="1"/>
</dbReference>
<dbReference type="HAMAP" id="MF_01678">
    <property type="entry name" value="Salvage_MtnA"/>
    <property type="match status" value="1"/>
</dbReference>
<dbReference type="InterPro" id="IPR043679">
    <property type="entry name" value="Deoxyribose1P_isomerase_DrdI"/>
</dbReference>
<dbReference type="InterPro" id="IPR000649">
    <property type="entry name" value="IF-2B-related"/>
</dbReference>
<dbReference type="InterPro" id="IPR005251">
    <property type="entry name" value="IF-M1Pi"/>
</dbReference>
<dbReference type="InterPro" id="IPR042529">
    <property type="entry name" value="IF_2B-like_C"/>
</dbReference>
<dbReference type="InterPro" id="IPR011559">
    <property type="entry name" value="Initiation_fac_2B_a/b/d"/>
</dbReference>
<dbReference type="InterPro" id="IPR027363">
    <property type="entry name" value="M1Pi_N"/>
</dbReference>
<dbReference type="InterPro" id="IPR037171">
    <property type="entry name" value="NagB/RpiA_transferase-like"/>
</dbReference>
<dbReference type="NCBIfam" id="TIGR00524">
    <property type="entry name" value="eIF-2B_rel"/>
    <property type="match status" value="1"/>
</dbReference>
<dbReference type="NCBIfam" id="NF004326">
    <property type="entry name" value="PRK05720.1"/>
    <property type="match status" value="1"/>
</dbReference>
<dbReference type="NCBIfam" id="TIGR00512">
    <property type="entry name" value="salvage_mtnA"/>
    <property type="match status" value="1"/>
</dbReference>
<dbReference type="PANTHER" id="PTHR43475">
    <property type="entry name" value="METHYLTHIORIBOSE-1-PHOSPHATE ISOMERASE"/>
    <property type="match status" value="1"/>
</dbReference>
<dbReference type="PANTHER" id="PTHR43475:SF1">
    <property type="entry name" value="METHYLTHIORIBOSE-1-PHOSPHATE ISOMERASE"/>
    <property type="match status" value="1"/>
</dbReference>
<dbReference type="Pfam" id="PF01008">
    <property type="entry name" value="IF-2B"/>
    <property type="match status" value="1"/>
</dbReference>
<dbReference type="SUPFAM" id="SSF100950">
    <property type="entry name" value="NagB/RpiA/CoA transferase-like"/>
    <property type="match status" value="1"/>
</dbReference>
<comment type="function">
    <text evidence="1">Catalyzes the isomerization of 5-deoxy-alpha-D-ribose 1-phosphate to 5-deoxy-D-ribulose 1-phosphate, as part of a 5-deoxyribose salvage pathway that recycles this toxic radical SAM enzyme by-product to mainstream metabolites.</text>
</comment>
<comment type="catalytic activity">
    <reaction evidence="1">
        <text>5-deoxy-alpha-D-ribose 1-phosphate = 5-deoxy-D-ribulose 1-phosphate</text>
        <dbReference type="Rhea" id="RHEA:61296"/>
        <dbReference type="ChEBI" id="CHEBI:58749"/>
        <dbReference type="ChEBI" id="CHEBI:144504"/>
    </reaction>
    <physiologicalReaction direction="left-to-right" evidence="1">
        <dbReference type="Rhea" id="RHEA:61297"/>
    </physiologicalReaction>
</comment>
<comment type="pathway">
    <text evidence="1">Carbohydrate degradation.</text>
</comment>
<comment type="similarity">
    <text evidence="1">Belongs to the EIF-2B alpha/beta/delta subunits family. DrdI subfamily.</text>
</comment>
<comment type="sequence caution" evidence="2">
    <conflict type="erroneous initiation">
        <sequence resource="EMBL-CDS" id="AAT52663"/>
    </conflict>
</comment>
<protein>
    <recommendedName>
        <fullName evidence="1">5-deoxyribose 1-phosphate isomerase</fullName>
        <ecNumber evidence="1">5.3.1.-</ecNumber>
    </recommendedName>
</protein>
<sequence>MEEQLIPIQWKDDALVLLDQTLLPNEVVYESFNTAEGVWDAIQVMKVRGAPAIGVSAAYGVYLGVKEFVESTEAEFIDEVKRVCAYLATSRPTAVNLFWALERMESVATDHTHLSITQLKDRLLEEAKEIHREDEEINRQIGEHALTLFHDGMGVLTHCNAGALATTKYGTATAPMYLAKEKGWDLKIYSDETRPRLQGSTLTALELQRAGIDVTVITDNMAAMVMSQGKIDAVIVGCDRVAANGDVANKIGTLGVSILAKYYNIPFYVAAPTPTIDLKTPTGKEIPIEERDASEVINRFGQYSAPKESKVYNPAFDVTPHENVTAIITEKGIVKAPFTENLKKLFQ</sequence>
<reference key="1">
    <citation type="journal article" date="2003" name="Nature">
        <title>The genome sequence of Bacillus anthracis Ames and comparison to closely related bacteria.</title>
        <authorList>
            <person name="Read T.D."/>
            <person name="Peterson S.N."/>
            <person name="Tourasse N.J."/>
            <person name="Baillie L.W."/>
            <person name="Paulsen I.T."/>
            <person name="Nelson K.E."/>
            <person name="Tettelin H."/>
            <person name="Fouts D.E."/>
            <person name="Eisen J.A."/>
            <person name="Gill S.R."/>
            <person name="Holtzapple E.K."/>
            <person name="Okstad O.A."/>
            <person name="Helgason E."/>
            <person name="Rilstone J."/>
            <person name="Wu M."/>
            <person name="Kolonay J.F."/>
            <person name="Beanan M.J."/>
            <person name="Dodson R.J."/>
            <person name="Brinkac L.M."/>
            <person name="Gwinn M.L."/>
            <person name="DeBoy R.T."/>
            <person name="Madpu R."/>
            <person name="Daugherty S.C."/>
            <person name="Durkin A.S."/>
            <person name="Haft D.H."/>
            <person name="Nelson W.C."/>
            <person name="Peterson J.D."/>
            <person name="Pop M."/>
            <person name="Khouri H.M."/>
            <person name="Radune D."/>
            <person name="Benton J.L."/>
            <person name="Mahamoud Y."/>
            <person name="Jiang L."/>
            <person name="Hance I.R."/>
            <person name="Weidman J.F."/>
            <person name="Berry K.J."/>
            <person name="Plaut R.D."/>
            <person name="Wolf A.M."/>
            <person name="Watkins K.L."/>
            <person name="Nierman W.C."/>
            <person name="Hazen A."/>
            <person name="Cline R.T."/>
            <person name="Redmond C."/>
            <person name="Thwaite J.E."/>
            <person name="White O."/>
            <person name="Salzberg S.L."/>
            <person name="Thomason B."/>
            <person name="Friedlander A.M."/>
            <person name="Koehler T.M."/>
            <person name="Hanna P.C."/>
            <person name="Kolstoe A.-B."/>
            <person name="Fraser C.M."/>
        </authorList>
    </citation>
    <scope>NUCLEOTIDE SEQUENCE [LARGE SCALE GENOMIC DNA]</scope>
    <source>
        <strain>Ames / isolate Porton</strain>
    </source>
</reference>
<reference key="2">
    <citation type="journal article" date="2009" name="J. Bacteriol.">
        <title>The complete genome sequence of Bacillus anthracis Ames 'Ancestor'.</title>
        <authorList>
            <person name="Ravel J."/>
            <person name="Jiang L."/>
            <person name="Stanley S.T."/>
            <person name="Wilson M.R."/>
            <person name="Decker R.S."/>
            <person name="Read T.D."/>
            <person name="Worsham P."/>
            <person name="Keim P.S."/>
            <person name="Salzberg S.L."/>
            <person name="Fraser-Liggett C.M."/>
            <person name="Rasko D.A."/>
        </authorList>
    </citation>
    <scope>NUCLEOTIDE SEQUENCE [LARGE SCALE GENOMIC DNA]</scope>
    <source>
        <strain>Ames ancestor</strain>
    </source>
</reference>
<reference key="3">
    <citation type="submission" date="2004-01" db="EMBL/GenBank/DDBJ databases">
        <title>Complete genome sequence of Bacillus anthracis Sterne.</title>
        <authorList>
            <person name="Brettin T.S."/>
            <person name="Bruce D."/>
            <person name="Challacombe J.F."/>
            <person name="Gilna P."/>
            <person name="Han C."/>
            <person name="Hill K."/>
            <person name="Hitchcock P."/>
            <person name="Jackson P."/>
            <person name="Keim P."/>
            <person name="Longmire J."/>
            <person name="Lucas S."/>
            <person name="Okinaka R."/>
            <person name="Richardson P."/>
            <person name="Rubin E."/>
            <person name="Tice H."/>
        </authorList>
    </citation>
    <scope>NUCLEOTIDE SEQUENCE [LARGE SCALE GENOMIC DNA]</scope>
    <source>
        <strain>Sterne</strain>
    </source>
</reference>
<evidence type="ECO:0000255" key="1">
    <source>
        <dbReference type="HAMAP-Rule" id="MF_02229"/>
    </source>
</evidence>
<evidence type="ECO:0000305" key="2"/>